<dbReference type="EC" id="7.1.1.9"/>
<dbReference type="EMBL" id="L04457">
    <property type="protein sequence ID" value="AAA32022.2"/>
    <property type="molecule type" value="Genomic_DNA"/>
</dbReference>
<dbReference type="GO" id="GO:0005743">
    <property type="term" value="C:mitochondrial inner membrane"/>
    <property type="evidence" value="ECO:0007669"/>
    <property type="project" value="UniProtKB-SubCell"/>
</dbReference>
<dbReference type="GO" id="GO:0005507">
    <property type="term" value="F:copper ion binding"/>
    <property type="evidence" value="ECO:0007669"/>
    <property type="project" value="InterPro"/>
</dbReference>
<dbReference type="GO" id="GO:0004129">
    <property type="term" value="F:cytochrome-c oxidase activity"/>
    <property type="evidence" value="ECO:0007669"/>
    <property type="project" value="UniProtKB-EC"/>
</dbReference>
<dbReference type="GO" id="GO:0042773">
    <property type="term" value="P:ATP synthesis coupled electron transport"/>
    <property type="evidence" value="ECO:0007669"/>
    <property type="project" value="TreeGrafter"/>
</dbReference>
<dbReference type="CDD" id="cd13912">
    <property type="entry name" value="CcO_II_C"/>
    <property type="match status" value="1"/>
</dbReference>
<dbReference type="FunFam" id="1.10.287.90:FF:000004">
    <property type="entry name" value="Cytochrome c oxidase subunit 2"/>
    <property type="match status" value="1"/>
</dbReference>
<dbReference type="FunFam" id="2.60.40.420:FF:000001">
    <property type="entry name" value="Cytochrome c oxidase subunit 2"/>
    <property type="match status" value="1"/>
</dbReference>
<dbReference type="Gene3D" id="1.10.287.90">
    <property type="match status" value="1"/>
</dbReference>
<dbReference type="Gene3D" id="2.60.40.420">
    <property type="entry name" value="Cupredoxins - blue copper proteins"/>
    <property type="match status" value="1"/>
</dbReference>
<dbReference type="InterPro" id="IPR045187">
    <property type="entry name" value="CcO_II"/>
</dbReference>
<dbReference type="InterPro" id="IPR002429">
    <property type="entry name" value="CcO_II-like_C"/>
</dbReference>
<dbReference type="InterPro" id="IPR034210">
    <property type="entry name" value="CcO_II_C"/>
</dbReference>
<dbReference type="InterPro" id="IPR001505">
    <property type="entry name" value="Copper_CuA"/>
</dbReference>
<dbReference type="InterPro" id="IPR008972">
    <property type="entry name" value="Cupredoxin"/>
</dbReference>
<dbReference type="InterPro" id="IPR014222">
    <property type="entry name" value="Cyt_c_oxidase_su2"/>
</dbReference>
<dbReference type="InterPro" id="IPR011759">
    <property type="entry name" value="Cyt_c_oxidase_su2_TM_dom"/>
</dbReference>
<dbReference type="InterPro" id="IPR036257">
    <property type="entry name" value="Cyt_c_oxidase_su2_TM_sf"/>
</dbReference>
<dbReference type="NCBIfam" id="TIGR02866">
    <property type="entry name" value="CoxB"/>
    <property type="match status" value="1"/>
</dbReference>
<dbReference type="PANTHER" id="PTHR22888:SF9">
    <property type="entry name" value="CYTOCHROME C OXIDASE SUBUNIT 2"/>
    <property type="match status" value="1"/>
</dbReference>
<dbReference type="PANTHER" id="PTHR22888">
    <property type="entry name" value="CYTOCHROME C OXIDASE, SUBUNIT II"/>
    <property type="match status" value="1"/>
</dbReference>
<dbReference type="Pfam" id="PF00116">
    <property type="entry name" value="COX2"/>
    <property type="match status" value="1"/>
</dbReference>
<dbReference type="Pfam" id="PF02790">
    <property type="entry name" value="COX2_TM"/>
    <property type="match status" value="1"/>
</dbReference>
<dbReference type="PRINTS" id="PR01166">
    <property type="entry name" value="CYCOXIDASEII"/>
</dbReference>
<dbReference type="SUPFAM" id="SSF49503">
    <property type="entry name" value="Cupredoxins"/>
    <property type="match status" value="1"/>
</dbReference>
<dbReference type="SUPFAM" id="SSF81464">
    <property type="entry name" value="Cytochrome c oxidase subunit II-like, transmembrane region"/>
    <property type="match status" value="1"/>
</dbReference>
<dbReference type="PROSITE" id="PS00078">
    <property type="entry name" value="COX2"/>
    <property type="match status" value="1"/>
</dbReference>
<dbReference type="PROSITE" id="PS50857">
    <property type="entry name" value="COX2_CUA"/>
    <property type="match status" value="1"/>
</dbReference>
<dbReference type="PROSITE" id="PS50999">
    <property type="entry name" value="COX2_TM"/>
    <property type="match status" value="1"/>
</dbReference>
<organism>
    <name type="scientific">Phytophthora megasperma</name>
    <name type="common">Potato pink rot fungus</name>
    <dbReference type="NCBI Taxonomy" id="4788"/>
    <lineage>
        <taxon>Eukaryota</taxon>
        <taxon>Sar</taxon>
        <taxon>Stramenopiles</taxon>
        <taxon>Oomycota</taxon>
        <taxon>Peronosporales</taxon>
        <taxon>Peronosporaceae</taxon>
        <taxon>Phytophthora</taxon>
    </lineage>
</organism>
<feature type="chain" id="PRO_0000183661" description="Cytochrome c oxidase subunit 2">
    <location>
        <begin position="1"/>
        <end position="266"/>
    </location>
</feature>
<feature type="topological domain" description="Mitochondrial intermembrane" evidence="2">
    <location>
        <begin position="1"/>
        <end position="43"/>
    </location>
</feature>
<feature type="transmembrane region" description="Helical" evidence="2">
    <location>
        <begin position="44"/>
        <end position="64"/>
    </location>
</feature>
<feature type="topological domain" description="Mitochondrial matrix" evidence="2">
    <location>
        <begin position="65"/>
        <end position="82"/>
    </location>
</feature>
<feature type="transmembrane region" description="Helical" evidence="2">
    <location>
        <begin position="83"/>
        <end position="103"/>
    </location>
</feature>
<feature type="topological domain" description="Mitochondrial intermembrane" evidence="2">
    <location>
        <begin position="104"/>
        <end position="266"/>
    </location>
</feature>
<feature type="binding site" evidence="1">
    <location>
        <position position="186"/>
    </location>
    <ligand>
        <name>Cu cation</name>
        <dbReference type="ChEBI" id="CHEBI:23378"/>
        <label>A1</label>
    </ligand>
</feature>
<feature type="binding site" evidence="1">
    <location>
        <position position="221"/>
    </location>
    <ligand>
        <name>Cu cation</name>
        <dbReference type="ChEBI" id="CHEBI:23378"/>
        <label>A1</label>
    </ligand>
</feature>
<feature type="binding site" evidence="1">
    <location>
        <position position="221"/>
    </location>
    <ligand>
        <name>Cu cation</name>
        <dbReference type="ChEBI" id="CHEBI:23378"/>
        <label>A2</label>
    </ligand>
</feature>
<feature type="binding site" evidence="1">
    <location>
        <position position="223"/>
    </location>
    <ligand>
        <name>Cu cation</name>
        <dbReference type="ChEBI" id="CHEBI:23378"/>
        <label>A2</label>
    </ligand>
</feature>
<feature type="binding site" evidence="1">
    <location>
        <position position="223"/>
    </location>
    <ligand>
        <name>Mg(2+)</name>
        <dbReference type="ChEBI" id="CHEBI:18420"/>
        <note>ligand shared with subunit 1</note>
    </ligand>
</feature>
<feature type="binding site" evidence="1">
    <location>
        <position position="225"/>
    </location>
    <ligand>
        <name>Cu cation</name>
        <dbReference type="ChEBI" id="CHEBI:23378"/>
        <label>A1</label>
    </ligand>
</feature>
<feature type="binding site" evidence="1">
    <location>
        <position position="225"/>
    </location>
    <ligand>
        <name>Cu cation</name>
        <dbReference type="ChEBI" id="CHEBI:23378"/>
        <label>A2</label>
    </ligand>
</feature>
<feature type="binding site" evidence="1">
    <location>
        <position position="229"/>
    </location>
    <ligand>
        <name>Cu cation</name>
        <dbReference type="ChEBI" id="CHEBI:23378"/>
        <label>A2</label>
    </ligand>
</feature>
<feature type="binding site" evidence="1">
    <location>
        <position position="232"/>
    </location>
    <ligand>
        <name>Cu cation</name>
        <dbReference type="ChEBI" id="CHEBI:23378"/>
        <label>A1</label>
    </ligand>
</feature>
<proteinExistence type="inferred from homology"/>
<keyword id="KW-0186">Copper</keyword>
<keyword id="KW-0249">Electron transport</keyword>
<keyword id="KW-0460">Magnesium</keyword>
<keyword id="KW-0472">Membrane</keyword>
<keyword id="KW-0479">Metal-binding</keyword>
<keyword id="KW-0496">Mitochondrion</keyword>
<keyword id="KW-0999">Mitochondrion inner membrane</keyword>
<keyword id="KW-0679">Respiratory chain</keyword>
<keyword id="KW-1278">Translocase</keyword>
<keyword id="KW-0812">Transmembrane</keyword>
<keyword id="KW-1133">Transmembrane helix</keyword>
<keyword id="KW-0813">Transport</keyword>
<evidence type="ECO:0000250" key="1">
    <source>
        <dbReference type="UniProtKB" id="P00410"/>
    </source>
</evidence>
<evidence type="ECO:0000255" key="2"/>
<evidence type="ECO:0000305" key="3"/>
<name>COX2_PHYME</name>
<gene>
    <name type="primary">COX2</name>
</gene>
<protein>
    <recommendedName>
        <fullName>Cytochrome c oxidase subunit 2</fullName>
        <ecNumber>7.1.1.9</ecNumber>
    </recommendedName>
    <alternativeName>
        <fullName>Cytochrome c oxidase polypeptide II</fullName>
    </alternativeName>
</protein>
<comment type="function">
    <text evidence="1">Component of the cytochrome c oxidase, the last enzyme in the mitochondrial electron transport chain which drives oxidative phosphorylation. The respiratory chain contains 3 multisubunit complexes succinate dehydrogenase (complex II, CII), ubiquinol-cytochrome c oxidoreductase (cytochrome b-c1 complex, complex III, CIII) and cytochrome c oxidase (complex IV, CIV), that cooperate to transfer electrons derived from NADH and succinate to molecular oxygen, creating an electrochemical gradient over the inner membrane that drives transmembrane transport and the ATP synthase. Cytochrome c oxidase is the component of the respiratory chain that catalyzes the reduction of oxygen to water. Electrons originating from reduced cytochrome c in the intermembrane space (IMS) are transferred via the dinuclear copper A center (CU(A)) of subunit 2 and heme A of subunit 1 to the active site in subunit 1, a binuclear center (BNC) formed by heme A3 and copper B (CU(B)). The BNC reduces molecular oxygen to 2 water molecules using 4 electrons from cytochrome c in the IMS and 4 protons from the mitochondrial matrix.</text>
</comment>
<comment type="catalytic activity">
    <reaction evidence="1">
        <text>4 Fe(II)-[cytochrome c] + O2 + 8 H(+)(in) = 4 Fe(III)-[cytochrome c] + 2 H2O + 4 H(+)(out)</text>
        <dbReference type="Rhea" id="RHEA:11436"/>
        <dbReference type="Rhea" id="RHEA-COMP:10350"/>
        <dbReference type="Rhea" id="RHEA-COMP:14399"/>
        <dbReference type="ChEBI" id="CHEBI:15377"/>
        <dbReference type="ChEBI" id="CHEBI:15378"/>
        <dbReference type="ChEBI" id="CHEBI:15379"/>
        <dbReference type="ChEBI" id="CHEBI:29033"/>
        <dbReference type="ChEBI" id="CHEBI:29034"/>
        <dbReference type="EC" id="7.1.1.9"/>
    </reaction>
    <physiologicalReaction direction="left-to-right" evidence="1">
        <dbReference type="Rhea" id="RHEA:11437"/>
    </physiologicalReaction>
</comment>
<comment type="cofactor">
    <cofactor evidence="1">
        <name>Cu cation</name>
        <dbReference type="ChEBI" id="CHEBI:23378"/>
    </cofactor>
    <text evidence="1">Binds a dinuclear copper A center per subunit.</text>
</comment>
<comment type="subunit">
    <text evidence="1">Component of the cytochrome c oxidase (complex IV, CIV), a multisubunit enzyme composed of a catalytic core of 3 subunits and several supernumerary subunits. The complex exists as a monomer or a dimer and forms supercomplexes (SCs) in the inner mitochondrial membrane with ubiquinol-cytochrome c oxidoreductase (cytochrome b-c1 complex, complex III, CIII).</text>
</comment>
<comment type="subcellular location">
    <subcellularLocation>
        <location evidence="1">Mitochondrion inner membrane</location>
        <topology evidence="1">Multi-pass membrane protein</topology>
    </subcellularLocation>
</comment>
<comment type="similarity">
    <text evidence="3">Belongs to the cytochrome c oxidase subunit 2 family.</text>
</comment>
<sequence>MTITNYINNQFTFLDMAEPWQLGFQDPATPVMEGIINFHHDLMFFLISIVVFVCWMLFRVITLFDEKKNKIPATVVHGATIEIIWTSIPALILLTVAVPSFALLYSMDEVIDPIITLKVIGSQWYWSYEYSDNLEFSDEPLIFDSYMIQEDDLAIGQFRILEVDNRVVVPTNSHIRVLITASDVLHSWAIPSLGIKLDACPGRLNQTSMFIKREGVFYGQCSEICGVNHGFMPIVVEAVSLEDYLTWLKNKINFDFNVXLIKFYGI</sequence>
<accession>Q02212</accession>
<reference key="1">
    <citation type="journal article" date="1990" name="Curr. Genet.">
        <title>Genic rearrangements in Phytophthora mitochondrial DNA.</title>
        <authorList>
            <person name="Shumard-Hudspeth D.S."/>
            <person name="Hudspeth M.E."/>
        </authorList>
    </citation>
    <scope>NUCLEOTIDE SEQUENCE [GENOMIC DNA]</scope>
    <source>
        <strain>695T</strain>
        <tissue>Mycelium</tissue>
    </source>
</reference>
<reference key="2">
    <citation type="journal article" date="1993" name="Exp. Mycol.">
        <title>Oomycete mtDNA: Phytophthora genes for cytochrome c oxidase use an unmodified genetic code and encode proteins most similar to plants.</title>
        <authorList>
            <person name="Sachay D.J."/>
            <person name="Hudspeth D.S."/>
            <person name="Nadler S.A."/>
            <person name="Hudspeth M.E."/>
        </authorList>
    </citation>
    <scope>NUCLEOTIDE SEQUENCE [GENOMIC DNA]</scope>
    <source>
        <strain>695T</strain>
        <tissue>Mycelium</tissue>
    </source>
</reference>
<geneLocation type="mitochondrion"/>